<feature type="chain" id="PRO_0000057611" description="Hydroxymethylglutaryl-CoA synthase">
    <location>
        <begin position="1"/>
        <end position="361"/>
    </location>
</feature>
<feature type="active site" description="Proton donor/acceptor" evidence="1">
    <location>
        <position position="92"/>
    </location>
</feature>
<feature type="active site" description="Acyl-thioester intermediate" evidence="1">
    <location>
        <position position="124"/>
    </location>
</feature>
<feature type="active site" description="Proton donor/acceptor" evidence="1">
    <location>
        <position position="247"/>
    </location>
</feature>
<feature type="binding site" evidence="1">
    <location>
        <position position="124"/>
    </location>
    <ligand>
        <name>(3S)-3-hydroxy-3-methylglutaryl-CoA</name>
        <dbReference type="ChEBI" id="CHEBI:43074"/>
    </ligand>
</feature>
<feature type="binding site" evidence="1">
    <location>
        <position position="165"/>
    </location>
    <ligand>
        <name>(3S)-3-hydroxy-3-methylglutaryl-CoA</name>
        <dbReference type="ChEBI" id="CHEBI:43074"/>
    </ligand>
</feature>
<feature type="binding site" evidence="1">
    <location>
        <position position="214"/>
    </location>
    <ligand>
        <name>(3S)-3-hydroxy-3-methylglutaryl-CoA</name>
        <dbReference type="ChEBI" id="CHEBI:43074"/>
    </ligand>
</feature>
<feature type="binding site" evidence="1">
    <location>
        <position position="247"/>
    </location>
    <ligand>
        <name>(3S)-3-hydroxy-3-methylglutaryl-CoA</name>
        <dbReference type="ChEBI" id="CHEBI:43074"/>
    </ligand>
</feature>
<feature type="binding site" evidence="1">
    <location>
        <position position="252"/>
    </location>
    <ligand>
        <name>CoA</name>
        <dbReference type="ChEBI" id="CHEBI:57287"/>
        <note>ligand shared with acetoacetyl-CoA thiolase</note>
    </ligand>
</feature>
<feature type="binding site" evidence="1">
    <location>
        <position position="256"/>
    </location>
    <ligand>
        <name>(3S)-3-hydroxy-3-methylglutaryl-CoA</name>
        <dbReference type="ChEBI" id="CHEBI:43074"/>
    </ligand>
</feature>
<feature type="binding site" evidence="1">
    <location>
        <position position="279"/>
    </location>
    <ligand>
        <name>(3S)-3-hydroxy-3-methylglutaryl-CoA</name>
        <dbReference type="ChEBI" id="CHEBI:43074"/>
    </ligand>
</feature>
<feature type="binding site" evidence="1">
    <location>
        <position position="309"/>
    </location>
    <ligand>
        <name>(3S)-3-hydroxy-3-methylglutaryl-CoA</name>
        <dbReference type="ChEBI" id="CHEBI:43074"/>
    </ligand>
</feature>
<gene>
    <name type="ordered locus">APE_1873.1</name>
</gene>
<sequence>MPVDSLVGKTPESSAGIHGWGAYVPVYRIPTREIARVWGWPDHQWKALDVYEKAVGGVDEDSTTMGVEAARNAIARARVDPASIGAVFFGSESKPYAVKPSATIIAEALGITPVTMASDLEFACRAASEGMRASIGLVASGVVGYTLVVGSDTAQASPGDVLEFSASSGAAAFVIGPSKGAAAVFESSFTYVTDTPDFWRRGLKPYPSHGEGFTGEPAYFHHIESAVKGLFEKTGLSPGDFDYAIFHQPNGKFPVKVAKKLGFTMEQVKPGLVTPFIGNTYNASALLGLVKVLDVAKPGDRILVAPFGSGAGSDAYSLIVTDAIEEAKPLAQPLEYYLKRRIEIDYGVYAKIRGKLVVRKL</sequence>
<reference key="1">
    <citation type="journal article" date="1999" name="DNA Res.">
        <title>Complete genome sequence of an aerobic hyper-thermophilic crenarchaeon, Aeropyrum pernix K1.</title>
        <authorList>
            <person name="Kawarabayasi Y."/>
            <person name="Hino Y."/>
            <person name="Horikawa H."/>
            <person name="Yamazaki S."/>
            <person name="Haikawa Y."/>
            <person name="Jin-no K."/>
            <person name="Takahashi M."/>
            <person name="Sekine M."/>
            <person name="Baba S."/>
            <person name="Ankai A."/>
            <person name="Kosugi H."/>
            <person name="Hosoyama A."/>
            <person name="Fukui S."/>
            <person name="Nagai Y."/>
            <person name="Nishijima K."/>
            <person name="Nakazawa H."/>
            <person name="Takamiya M."/>
            <person name="Masuda S."/>
            <person name="Funahashi T."/>
            <person name="Tanaka T."/>
            <person name="Kudoh Y."/>
            <person name="Yamazaki J."/>
            <person name="Kushida N."/>
            <person name="Oguchi A."/>
            <person name="Aoki K."/>
            <person name="Kubota K."/>
            <person name="Nakamura Y."/>
            <person name="Nomura N."/>
            <person name="Sako Y."/>
            <person name="Kikuchi H."/>
        </authorList>
    </citation>
    <scope>NUCLEOTIDE SEQUENCE [LARGE SCALE GENOMIC DNA]</scope>
    <source>
        <strain>ATCC 700893 / DSM 11879 / JCM 9820 / NBRC 100138 / K1</strain>
    </source>
</reference>
<comment type="function">
    <text evidence="1">Catalyzes the condensation of acetyl-CoA with acetoacetyl-CoA to form 3-hydroxy-3-methylglutaryl-CoA (HMG-CoA). Functions in the mevalonate (MVA) pathway leading to isopentenyl diphosphate (IPP), a key precursor for the biosynthesis of isoprenoid compounds that are building blocks of archaeal membrane lipids.</text>
</comment>
<comment type="catalytic activity">
    <reaction evidence="1">
        <text>acetoacetyl-CoA + acetyl-CoA + H2O = (3S)-3-hydroxy-3-methylglutaryl-CoA + CoA + H(+)</text>
        <dbReference type="Rhea" id="RHEA:10188"/>
        <dbReference type="ChEBI" id="CHEBI:15377"/>
        <dbReference type="ChEBI" id="CHEBI:15378"/>
        <dbReference type="ChEBI" id="CHEBI:43074"/>
        <dbReference type="ChEBI" id="CHEBI:57286"/>
        <dbReference type="ChEBI" id="CHEBI:57287"/>
        <dbReference type="ChEBI" id="CHEBI:57288"/>
        <dbReference type="EC" id="2.3.3.10"/>
    </reaction>
    <physiologicalReaction direction="left-to-right" evidence="1">
        <dbReference type="Rhea" id="RHEA:10189"/>
    </physiologicalReaction>
</comment>
<comment type="pathway">
    <text evidence="1">Metabolic intermediate biosynthesis; (R)-mevalonate biosynthesis; (R)-mevalonate from acetyl-CoA: step 2/3.</text>
</comment>
<comment type="subunit">
    <text evidence="1">Interacts with acetoacetyl-CoA thiolase that catalyzes the precedent step in the pathway and with a DUF35 protein. The acetoacetyl-CoA thiolase/HMG-CoA synthase complex channels the intermediate via a fused CoA-binding site, which allows for efficient coupling of the endergonic thiolase reaction with the exergonic HMGCS reaction.</text>
</comment>
<comment type="similarity">
    <text evidence="1">Belongs to the thiolase-like superfamily. Archaeal HMG-CoA synthase family.</text>
</comment>
<name>HMGCS_AERPE</name>
<proteinExistence type="inferred from homology"/>
<accession>Q9YAS0</accession>
<evidence type="ECO:0000255" key="1">
    <source>
        <dbReference type="HAMAP-Rule" id="MF_01409"/>
    </source>
</evidence>
<organism>
    <name type="scientific">Aeropyrum pernix (strain ATCC 700893 / DSM 11879 / JCM 9820 / NBRC 100138 / K1)</name>
    <dbReference type="NCBI Taxonomy" id="272557"/>
    <lineage>
        <taxon>Archaea</taxon>
        <taxon>Thermoproteota</taxon>
        <taxon>Thermoprotei</taxon>
        <taxon>Desulfurococcales</taxon>
        <taxon>Desulfurococcaceae</taxon>
        <taxon>Aeropyrum</taxon>
    </lineage>
</organism>
<protein>
    <recommendedName>
        <fullName evidence="1">Hydroxymethylglutaryl-CoA synthase</fullName>
        <shortName evidence="1">HMG-CoA synthase</shortName>
        <shortName evidence="1">HMGCS</shortName>
        <ecNumber evidence="1">2.3.3.10</ecNumber>
    </recommendedName>
</protein>
<keyword id="KW-0012">Acyltransferase</keyword>
<keyword id="KW-0414">Isoprene biosynthesis</keyword>
<keyword id="KW-1185">Reference proteome</keyword>
<keyword id="KW-0808">Transferase</keyword>
<dbReference type="EC" id="2.3.3.10" evidence="1"/>
<dbReference type="EMBL" id="BA000002">
    <property type="protein sequence ID" value="BAA80878.2"/>
    <property type="molecule type" value="Genomic_DNA"/>
</dbReference>
<dbReference type="PIR" id="A72574">
    <property type="entry name" value="A72574"/>
</dbReference>
<dbReference type="RefSeq" id="WP_010866651.1">
    <property type="nucleotide sequence ID" value="NC_000854.2"/>
</dbReference>
<dbReference type="SMR" id="Q9YAS0"/>
<dbReference type="STRING" id="272557.APE_1873.1"/>
<dbReference type="EnsemblBacteria" id="BAA80878">
    <property type="protein sequence ID" value="BAA80878"/>
    <property type="gene ID" value="APE_1873.1"/>
</dbReference>
<dbReference type="GeneID" id="1446306"/>
<dbReference type="KEGG" id="ape:APE_1873.1"/>
<dbReference type="PATRIC" id="fig|272557.25.peg.1257"/>
<dbReference type="eggNOG" id="arCOG01767">
    <property type="taxonomic scope" value="Archaea"/>
</dbReference>
<dbReference type="UniPathway" id="UPA00058">
    <property type="reaction ID" value="UER00102"/>
</dbReference>
<dbReference type="Proteomes" id="UP000002518">
    <property type="component" value="Chromosome"/>
</dbReference>
<dbReference type="GO" id="GO:0003985">
    <property type="term" value="F:acetyl-CoA C-acetyltransferase activity"/>
    <property type="evidence" value="ECO:0007669"/>
    <property type="project" value="UniProtKB-UniRule"/>
</dbReference>
<dbReference type="GO" id="GO:0004421">
    <property type="term" value="F:hydroxymethylglutaryl-CoA synthase activity"/>
    <property type="evidence" value="ECO:0007669"/>
    <property type="project" value="InterPro"/>
</dbReference>
<dbReference type="GO" id="GO:0019287">
    <property type="term" value="P:isopentenyl diphosphate biosynthetic process, mevalonate pathway"/>
    <property type="evidence" value="ECO:0007669"/>
    <property type="project" value="UniProtKB-UniRule"/>
</dbReference>
<dbReference type="GO" id="GO:0044550">
    <property type="term" value="P:secondary metabolite biosynthetic process"/>
    <property type="evidence" value="ECO:0007669"/>
    <property type="project" value="TreeGrafter"/>
</dbReference>
<dbReference type="CDD" id="cd00827">
    <property type="entry name" value="init_cond_enzymes"/>
    <property type="match status" value="1"/>
</dbReference>
<dbReference type="Gene3D" id="3.40.47.10">
    <property type="match status" value="1"/>
</dbReference>
<dbReference type="HAMAP" id="MF_01409">
    <property type="entry name" value="HMG_CoA_synth_arch"/>
    <property type="match status" value="1"/>
</dbReference>
<dbReference type="InterPro" id="IPR013747">
    <property type="entry name" value="ACP_syn_III_C"/>
</dbReference>
<dbReference type="InterPro" id="IPR004656">
    <property type="entry name" value="HMG_CoA_Synthase"/>
</dbReference>
<dbReference type="InterPro" id="IPR016039">
    <property type="entry name" value="Thiolase-like"/>
</dbReference>
<dbReference type="NCBIfam" id="TIGR00748">
    <property type="entry name" value="HMG_CoA_syn_Arc"/>
    <property type="match status" value="1"/>
</dbReference>
<dbReference type="NCBIfam" id="NF003274">
    <property type="entry name" value="PRK04262.1"/>
    <property type="match status" value="1"/>
</dbReference>
<dbReference type="PANTHER" id="PTHR34069">
    <property type="entry name" value="3-OXOACYL-[ACYL-CARRIER-PROTEIN] SYNTHASE 3"/>
    <property type="match status" value="1"/>
</dbReference>
<dbReference type="PANTHER" id="PTHR34069:SF2">
    <property type="entry name" value="BETA-KETOACYL-[ACYL-CARRIER-PROTEIN] SYNTHASE III"/>
    <property type="match status" value="1"/>
</dbReference>
<dbReference type="Pfam" id="PF08541">
    <property type="entry name" value="ACP_syn_III_C"/>
    <property type="match status" value="1"/>
</dbReference>
<dbReference type="SUPFAM" id="SSF53901">
    <property type="entry name" value="Thiolase-like"/>
    <property type="match status" value="2"/>
</dbReference>